<feature type="chain" id="PRO_0000245668" description="NAD(P)H-quinone oxidoreductase subunit I, chloroplastic">
    <location>
        <begin position="1"/>
        <end position="179"/>
    </location>
</feature>
<feature type="domain" description="4Fe-4S ferredoxin-type 1" evidence="1">
    <location>
        <begin position="55"/>
        <end position="84"/>
    </location>
</feature>
<feature type="domain" description="4Fe-4S ferredoxin-type 2" evidence="1">
    <location>
        <begin position="95"/>
        <end position="124"/>
    </location>
</feature>
<feature type="binding site" evidence="1">
    <location>
        <position position="64"/>
    </location>
    <ligand>
        <name>[4Fe-4S] cluster</name>
        <dbReference type="ChEBI" id="CHEBI:49883"/>
        <label>1</label>
    </ligand>
</feature>
<feature type="binding site" evidence="1">
    <location>
        <position position="67"/>
    </location>
    <ligand>
        <name>[4Fe-4S] cluster</name>
        <dbReference type="ChEBI" id="CHEBI:49883"/>
        <label>1</label>
    </ligand>
</feature>
<feature type="binding site" evidence="1">
    <location>
        <position position="70"/>
    </location>
    <ligand>
        <name>[4Fe-4S] cluster</name>
        <dbReference type="ChEBI" id="CHEBI:49883"/>
        <label>1</label>
    </ligand>
</feature>
<feature type="binding site" evidence="1">
    <location>
        <position position="74"/>
    </location>
    <ligand>
        <name>[4Fe-4S] cluster</name>
        <dbReference type="ChEBI" id="CHEBI:49883"/>
        <label>2</label>
    </ligand>
</feature>
<feature type="binding site" evidence="1">
    <location>
        <position position="104"/>
    </location>
    <ligand>
        <name>[4Fe-4S] cluster</name>
        <dbReference type="ChEBI" id="CHEBI:49883"/>
        <label>2</label>
    </ligand>
</feature>
<feature type="binding site" evidence="1">
    <location>
        <position position="107"/>
    </location>
    <ligand>
        <name>[4Fe-4S] cluster</name>
        <dbReference type="ChEBI" id="CHEBI:49883"/>
        <label>2</label>
    </ligand>
</feature>
<feature type="binding site" evidence="1">
    <location>
        <position position="110"/>
    </location>
    <ligand>
        <name>[4Fe-4S] cluster</name>
        <dbReference type="ChEBI" id="CHEBI:49883"/>
        <label>2</label>
    </ligand>
</feature>
<feature type="binding site" evidence="1">
    <location>
        <position position="114"/>
    </location>
    <ligand>
        <name>[4Fe-4S] cluster</name>
        <dbReference type="ChEBI" id="CHEBI:49883"/>
        <label>1</label>
    </ligand>
</feature>
<proteinExistence type="inferred from homology"/>
<reference key="1">
    <citation type="journal article" date="2004" name="Mol. Biol. Evol.">
        <title>The chloroplast genome of Nymphaea alba: whole-genome analyses and the problem of identifying the most basal angiosperm.</title>
        <authorList>
            <person name="Goremykin V.V."/>
            <person name="Hirsch-Ernst K.I."/>
            <person name="Woelfl S."/>
            <person name="Hellwig F.H."/>
        </authorList>
    </citation>
    <scope>NUCLEOTIDE SEQUENCE [LARGE SCALE GENOMIC DNA]</scope>
</reference>
<accession>Q6EVZ6</accession>
<geneLocation type="chloroplast"/>
<sequence>MFPMVTGFMNYGQQTVRAARYIGQSFMITLSHANRLPVTIQYPYEKSITSERFRGRIHFEFDKCIACEVCVRVCPIDLPVVDWRLETDIRKKRLLNYSIDFGICIFCGNCVEYCPTNCLSMTEEYELSTYDRHELNYNQIALGRLPMSVIGDYTVRTIMNSTQIKISMDKPLDSRTITN</sequence>
<gene>
    <name evidence="1" type="primary">ndhI</name>
</gene>
<evidence type="ECO:0000255" key="1">
    <source>
        <dbReference type="HAMAP-Rule" id="MF_01351"/>
    </source>
</evidence>
<dbReference type="EC" id="7.1.1.-" evidence="1"/>
<dbReference type="EMBL" id="AJ627251">
    <property type="protein sequence ID" value="CAF28650.1"/>
    <property type="molecule type" value="Genomic_DNA"/>
</dbReference>
<dbReference type="RefSeq" id="YP_053210.1">
    <property type="nucleotide sequence ID" value="NC_006050.1"/>
</dbReference>
<dbReference type="SMR" id="Q6EVZ6"/>
<dbReference type="GeneID" id="2896169"/>
<dbReference type="GO" id="GO:0009535">
    <property type="term" value="C:chloroplast thylakoid membrane"/>
    <property type="evidence" value="ECO:0007669"/>
    <property type="project" value="UniProtKB-SubCell"/>
</dbReference>
<dbReference type="GO" id="GO:0051539">
    <property type="term" value="F:4 iron, 4 sulfur cluster binding"/>
    <property type="evidence" value="ECO:0007669"/>
    <property type="project" value="UniProtKB-KW"/>
</dbReference>
<dbReference type="GO" id="GO:0005506">
    <property type="term" value="F:iron ion binding"/>
    <property type="evidence" value="ECO:0007669"/>
    <property type="project" value="UniProtKB-UniRule"/>
</dbReference>
<dbReference type="GO" id="GO:0008137">
    <property type="term" value="F:NADH dehydrogenase (ubiquinone) activity"/>
    <property type="evidence" value="ECO:0007669"/>
    <property type="project" value="InterPro"/>
</dbReference>
<dbReference type="GO" id="GO:0048038">
    <property type="term" value="F:quinone binding"/>
    <property type="evidence" value="ECO:0007669"/>
    <property type="project" value="UniProtKB-KW"/>
</dbReference>
<dbReference type="GO" id="GO:0019684">
    <property type="term" value="P:photosynthesis, light reaction"/>
    <property type="evidence" value="ECO:0007669"/>
    <property type="project" value="UniProtKB-UniRule"/>
</dbReference>
<dbReference type="FunFam" id="3.30.70.3270:FF:000006">
    <property type="entry name" value="NAD(P)H-quinone oxidoreductase subunit I, chloroplastic"/>
    <property type="match status" value="1"/>
</dbReference>
<dbReference type="Gene3D" id="3.30.70.3270">
    <property type="match status" value="1"/>
</dbReference>
<dbReference type="HAMAP" id="MF_01351">
    <property type="entry name" value="NDH1_NuoI"/>
    <property type="match status" value="1"/>
</dbReference>
<dbReference type="InterPro" id="IPR017896">
    <property type="entry name" value="4Fe4S_Fe-S-bd"/>
</dbReference>
<dbReference type="InterPro" id="IPR017900">
    <property type="entry name" value="4Fe4S_Fe_S_CS"/>
</dbReference>
<dbReference type="InterPro" id="IPR010226">
    <property type="entry name" value="NADH_quinone_OxRdtase_chainI"/>
</dbReference>
<dbReference type="InterPro" id="IPR004497">
    <property type="entry name" value="NDHI"/>
</dbReference>
<dbReference type="NCBIfam" id="TIGR00403">
    <property type="entry name" value="ndhI"/>
    <property type="match status" value="1"/>
</dbReference>
<dbReference type="NCBIfam" id="TIGR01971">
    <property type="entry name" value="NuoI"/>
    <property type="match status" value="1"/>
</dbReference>
<dbReference type="NCBIfam" id="NF004537">
    <property type="entry name" value="PRK05888.1-3"/>
    <property type="match status" value="1"/>
</dbReference>
<dbReference type="PANTHER" id="PTHR47275">
    <property type="entry name" value="NAD(P)H-QUINONE OXIDOREDUCTASE SUBUNIT I, CHLOROPLASTIC"/>
    <property type="match status" value="1"/>
</dbReference>
<dbReference type="PANTHER" id="PTHR47275:SF1">
    <property type="entry name" value="NAD(P)H-QUINONE OXIDOREDUCTASE SUBUNIT I, CHLOROPLASTIC"/>
    <property type="match status" value="1"/>
</dbReference>
<dbReference type="Pfam" id="PF12838">
    <property type="entry name" value="Fer4_7"/>
    <property type="match status" value="1"/>
</dbReference>
<dbReference type="SUPFAM" id="SSF54862">
    <property type="entry name" value="4Fe-4S ferredoxins"/>
    <property type="match status" value="1"/>
</dbReference>
<dbReference type="PROSITE" id="PS00198">
    <property type="entry name" value="4FE4S_FER_1"/>
    <property type="match status" value="2"/>
</dbReference>
<dbReference type="PROSITE" id="PS51379">
    <property type="entry name" value="4FE4S_FER_2"/>
    <property type="match status" value="2"/>
</dbReference>
<keyword id="KW-0004">4Fe-4S</keyword>
<keyword id="KW-0150">Chloroplast</keyword>
<keyword id="KW-0408">Iron</keyword>
<keyword id="KW-0411">Iron-sulfur</keyword>
<keyword id="KW-0472">Membrane</keyword>
<keyword id="KW-0479">Metal-binding</keyword>
<keyword id="KW-0520">NAD</keyword>
<keyword id="KW-0521">NADP</keyword>
<keyword id="KW-0934">Plastid</keyword>
<keyword id="KW-0618">Plastoquinone</keyword>
<keyword id="KW-0874">Quinone</keyword>
<keyword id="KW-0677">Repeat</keyword>
<keyword id="KW-0793">Thylakoid</keyword>
<keyword id="KW-1278">Translocase</keyword>
<comment type="function">
    <text evidence="1">NDH shuttles electrons from NAD(P)H:plastoquinone, via FMN and iron-sulfur (Fe-S) centers, to quinones in the photosynthetic chain and possibly in a chloroplast respiratory chain. The immediate electron acceptor for the enzyme in this species is believed to be plastoquinone. Couples the redox reaction to proton translocation, and thus conserves the redox energy in a proton gradient.</text>
</comment>
<comment type="catalytic activity">
    <reaction evidence="1">
        <text>a plastoquinone + NADH + (n+1) H(+)(in) = a plastoquinol + NAD(+) + n H(+)(out)</text>
        <dbReference type="Rhea" id="RHEA:42608"/>
        <dbReference type="Rhea" id="RHEA-COMP:9561"/>
        <dbReference type="Rhea" id="RHEA-COMP:9562"/>
        <dbReference type="ChEBI" id="CHEBI:15378"/>
        <dbReference type="ChEBI" id="CHEBI:17757"/>
        <dbReference type="ChEBI" id="CHEBI:57540"/>
        <dbReference type="ChEBI" id="CHEBI:57945"/>
        <dbReference type="ChEBI" id="CHEBI:62192"/>
    </reaction>
</comment>
<comment type="catalytic activity">
    <reaction evidence="1">
        <text>a plastoquinone + NADPH + (n+1) H(+)(in) = a plastoquinol + NADP(+) + n H(+)(out)</text>
        <dbReference type="Rhea" id="RHEA:42612"/>
        <dbReference type="Rhea" id="RHEA-COMP:9561"/>
        <dbReference type="Rhea" id="RHEA-COMP:9562"/>
        <dbReference type="ChEBI" id="CHEBI:15378"/>
        <dbReference type="ChEBI" id="CHEBI:17757"/>
        <dbReference type="ChEBI" id="CHEBI:57783"/>
        <dbReference type="ChEBI" id="CHEBI:58349"/>
        <dbReference type="ChEBI" id="CHEBI:62192"/>
    </reaction>
</comment>
<comment type="cofactor">
    <cofactor evidence="1">
        <name>[4Fe-4S] cluster</name>
        <dbReference type="ChEBI" id="CHEBI:49883"/>
    </cofactor>
    <text evidence="1">Binds 2 [4Fe-4S] clusters per subunit.</text>
</comment>
<comment type="subunit">
    <text evidence="1">NDH is composed of at least 16 different subunits, 5 of which are encoded in the nucleus.</text>
</comment>
<comment type="subcellular location">
    <subcellularLocation>
        <location evidence="1">Plastid</location>
        <location evidence="1">Chloroplast thylakoid membrane</location>
        <topology evidence="1">Peripheral membrane protein</topology>
    </subcellularLocation>
</comment>
<comment type="similarity">
    <text evidence="1">Belongs to the complex I 23 kDa subunit family.</text>
</comment>
<name>NDHI_NYMAL</name>
<protein>
    <recommendedName>
        <fullName evidence="1">NAD(P)H-quinone oxidoreductase subunit I, chloroplastic</fullName>
        <ecNumber evidence="1">7.1.1.-</ecNumber>
    </recommendedName>
    <alternativeName>
        <fullName evidence="1">NAD(P)H dehydrogenase subunit I</fullName>
        <shortName evidence="1">NDH subunit I</shortName>
    </alternativeName>
    <alternativeName>
        <fullName evidence="1">NADH-plastoquinone oxidoreductase subunit I</fullName>
    </alternativeName>
</protein>
<organism>
    <name type="scientific">Nymphaea alba</name>
    <name type="common">White water-lily</name>
    <name type="synonym">Castalia alba</name>
    <dbReference type="NCBI Taxonomy" id="34301"/>
    <lineage>
        <taxon>Eukaryota</taxon>
        <taxon>Viridiplantae</taxon>
        <taxon>Streptophyta</taxon>
        <taxon>Embryophyta</taxon>
        <taxon>Tracheophyta</taxon>
        <taxon>Spermatophyta</taxon>
        <taxon>Magnoliopsida</taxon>
        <taxon>Nymphaeales</taxon>
        <taxon>Nymphaeaceae</taxon>
        <taxon>Nymphaea</taxon>
    </lineage>
</organism>